<dbReference type="EMBL" id="Z23079">
    <property type="protein sequence ID" value="CAA80618.1"/>
    <property type="molecule type" value="Genomic_DNA"/>
</dbReference>
<dbReference type="EMBL" id="AE001437">
    <property type="protein sequence ID" value="AAK79663.1"/>
    <property type="molecule type" value="Genomic_DNA"/>
</dbReference>
<dbReference type="PIR" id="D97109">
    <property type="entry name" value="D97109"/>
</dbReference>
<dbReference type="PIR" id="I40623">
    <property type="entry name" value="I40623"/>
</dbReference>
<dbReference type="RefSeq" id="NP_348323.1">
    <property type="nucleotide sequence ID" value="NC_003030.1"/>
</dbReference>
<dbReference type="RefSeq" id="WP_010965004.1">
    <property type="nucleotide sequence ID" value="NC_003030.1"/>
</dbReference>
<dbReference type="SMR" id="P33660"/>
<dbReference type="STRING" id="272562.CA_C1697"/>
<dbReference type="KEGG" id="cac:CA_C1697"/>
<dbReference type="PATRIC" id="fig|272562.8.peg.1900"/>
<dbReference type="eggNOG" id="COG1873">
    <property type="taxonomic scope" value="Bacteria"/>
</dbReference>
<dbReference type="HOGENOM" id="CLU_161336_1_0_9"/>
<dbReference type="OrthoDB" id="6024937at2"/>
<dbReference type="Proteomes" id="UP000000814">
    <property type="component" value="Chromosome"/>
</dbReference>
<dbReference type="Gene3D" id="2.30.30.240">
    <property type="entry name" value="PRC-barrel domain"/>
    <property type="match status" value="1"/>
</dbReference>
<dbReference type="InterPro" id="IPR027275">
    <property type="entry name" value="PRC-brl_dom"/>
</dbReference>
<dbReference type="InterPro" id="IPR011033">
    <property type="entry name" value="PRC_barrel-like_sf"/>
</dbReference>
<dbReference type="InterPro" id="IPR014238">
    <property type="entry name" value="Spore_YlmC/YmxH"/>
</dbReference>
<dbReference type="NCBIfam" id="TIGR02888">
    <property type="entry name" value="spore_YlmC_YmxH"/>
    <property type="match status" value="1"/>
</dbReference>
<dbReference type="PANTHER" id="PTHR40061">
    <property type="entry name" value="SPORULATION PROTEIN YLMC-RELATED"/>
    <property type="match status" value="1"/>
</dbReference>
<dbReference type="PANTHER" id="PTHR40061:SF1">
    <property type="entry name" value="SPORULATION PROTEIN YLMC-RELATED"/>
    <property type="match status" value="1"/>
</dbReference>
<dbReference type="Pfam" id="PF05239">
    <property type="entry name" value="PRC"/>
    <property type="match status" value="1"/>
</dbReference>
<dbReference type="SUPFAM" id="SSF50346">
    <property type="entry name" value="PRC-barrel domain"/>
    <property type="match status" value="1"/>
</dbReference>
<sequence>MDLPSHSINAMKSMEVIDINTGTKLGLIKDLKIDTEEYKVISIILPGSKVGGWFSKGNDIEIDWTDIQKIGVDVILVNGDNLFVNKD</sequence>
<comment type="similarity">
    <text evidence="1">Belongs to the YlmC/YmxH family.</text>
</comment>
<protein>
    <recommendedName>
        <fullName>Uncharacterized protein CA_C1697</fullName>
    </recommendedName>
</protein>
<accession>P33660</accession>
<keyword id="KW-1185">Reference proteome</keyword>
<name>Y1697_CLOAB</name>
<evidence type="ECO:0000305" key="1"/>
<reference key="1">
    <citation type="journal article" date="1994" name="J. Bacteriol.">
        <title>Sporulation and primary sigma factor homologous genes in Clostridium acetobutylicum.</title>
        <authorList>
            <person name="Sauer U."/>
            <person name="Treuner A."/>
            <person name="Buchholz M."/>
            <person name="Santangelo J.D."/>
            <person name="Durre P."/>
        </authorList>
    </citation>
    <scope>NUCLEOTIDE SEQUENCE [GENOMIC DNA]</scope>
    <source>
        <strain>ATCC 824 / DSM 792 / JCM 1419 / IAM 19013 / LMG 5710 / NBRC 13948 / NRRL B-527 / VKM B-1787 / 2291 / W</strain>
    </source>
</reference>
<reference key="2">
    <citation type="journal article" date="2001" name="J. Bacteriol.">
        <title>Genome sequence and comparative analysis of the solvent-producing bacterium Clostridium acetobutylicum.</title>
        <authorList>
            <person name="Noelling J."/>
            <person name="Breton G."/>
            <person name="Omelchenko M.V."/>
            <person name="Makarova K.S."/>
            <person name="Zeng Q."/>
            <person name="Gibson R."/>
            <person name="Lee H.M."/>
            <person name="Dubois J."/>
            <person name="Qiu D."/>
            <person name="Hitti J."/>
            <person name="Wolf Y.I."/>
            <person name="Tatusov R.L."/>
            <person name="Sabathe F."/>
            <person name="Doucette-Stamm L.A."/>
            <person name="Soucaille P."/>
            <person name="Daly M.J."/>
            <person name="Bennett G.N."/>
            <person name="Koonin E.V."/>
            <person name="Smith D.R."/>
        </authorList>
    </citation>
    <scope>NUCLEOTIDE SEQUENCE [LARGE SCALE GENOMIC DNA]</scope>
    <source>
        <strain>ATCC 824 / DSM 792 / JCM 1419 / IAM 19013 / LMG 5710 / NBRC 13948 / NRRL B-527 / VKM B-1787 / 2291 / W</strain>
    </source>
</reference>
<gene>
    <name type="ordered locus">CA_C1697</name>
</gene>
<proteinExistence type="inferred from homology"/>
<organism>
    <name type="scientific">Clostridium acetobutylicum (strain ATCC 824 / DSM 792 / JCM 1419 / IAM 19013 / LMG 5710 / NBRC 13948 / NRRL B-527 / VKM B-1787 / 2291 / W)</name>
    <dbReference type="NCBI Taxonomy" id="272562"/>
    <lineage>
        <taxon>Bacteria</taxon>
        <taxon>Bacillati</taxon>
        <taxon>Bacillota</taxon>
        <taxon>Clostridia</taxon>
        <taxon>Eubacteriales</taxon>
        <taxon>Clostridiaceae</taxon>
        <taxon>Clostridium</taxon>
    </lineage>
</organism>
<feature type="chain" id="PRO_0000207113" description="Uncharacterized protein CA_C1697">
    <location>
        <begin position="1"/>
        <end position="87"/>
    </location>
</feature>